<keyword id="KW-0961">Cell wall biogenesis/degradation</keyword>
<keyword id="KW-1015">Disulfide bond</keyword>
<keyword id="KW-0325">Glycoprotein</keyword>
<keyword id="KW-0326">Glycosidase</keyword>
<keyword id="KW-0378">Hydrolase</keyword>
<keyword id="KW-0677">Repeat</keyword>
<keyword id="KW-0964">Secreted</keyword>
<keyword id="KW-0732">Signal</keyword>
<keyword id="KW-0865">Zymogen</keyword>
<evidence type="ECO:0000250" key="1"/>
<evidence type="ECO:0000255" key="2"/>
<evidence type="ECO:0000255" key="3">
    <source>
        <dbReference type="PROSITE-ProRule" id="PRU10052"/>
    </source>
</evidence>
<evidence type="ECO:0000305" key="4"/>
<proteinExistence type="inferred from homology"/>
<reference key="1">
    <citation type="journal article" date="1990" name="Plant Cell">
        <title>Endopolygalacturonase is not required for pathogenicity of Cochliobolus carbonum on maize.</title>
        <authorList>
            <person name="Scott-Craig J.S."/>
            <person name="Panaccione D.G."/>
            <person name="Cervone F."/>
            <person name="Walton J.D."/>
        </authorList>
    </citation>
    <scope>NUCLEOTIDE SEQUENCE [GENOMIC DNA]</scope>
</reference>
<organism>
    <name type="scientific">Cochliobolus carbonum</name>
    <name type="common">Maize leaf spot fungus</name>
    <name type="synonym">Bipolaris zeicola</name>
    <dbReference type="NCBI Taxonomy" id="5017"/>
    <lineage>
        <taxon>Eukaryota</taxon>
        <taxon>Fungi</taxon>
        <taxon>Dikarya</taxon>
        <taxon>Ascomycota</taxon>
        <taxon>Pezizomycotina</taxon>
        <taxon>Dothideomycetes</taxon>
        <taxon>Pleosporomycetidae</taxon>
        <taxon>Pleosporales</taxon>
        <taxon>Pleosporineae</taxon>
        <taxon>Pleosporaceae</taxon>
        <taxon>Bipolaris</taxon>
    </lineage>
</organism>
<feature type="signal peptide" evidence="2">
    <location>
        <begin position="1"/>
        <end position="21"/>
    </location>
</feature>
<feature type="propeptide" id="PRO_0000024782" evidence="2">
    <location>
        <begin position="22"/>
        <end position="27"/>
    </location>
</feature>
<feature type="chain" id="PRO_0000024783" description="Polygalacturonase">
    <location>
        <begin position="28"/>
        <end position="364"/>
    </location>
</feature>
<feature type="repeat" description="PbH1 1">
    <location>
        <begin position="158"/>
        <end position="188"/>
    </location>
</feature>
<feature type="repeat" description="PbH1 2">
    <location>
        <begin position="189"/>
        <end position="210"/>
    </location>
</feature>
<feature type="repeat" description="PbH1 3">
    <location>
        <begin position="211"/>
        <end position="231"/>
    </location>
</feature>
<feature type="repeat" description="PbH1 4">
    <location>
        <begin position="240"/>
        <end position="261"/>
    </location>
</feature>
<feature type="repeat" description="PbH1 5">
    <location>
        <begin position="269"/>
        <end position="291"/>
    </location>
</feature>
<feature type="repeat" description="PbH1 6">
    <location>
        <begin position="303"/>
        <end position="348"/>
    </location>
</feature>
<feature type="active site" description="Proton donor" evidence="3">
    <location>
        <position position="203"/>
    </location>
</feature>
<feature type="active site" evidence="3">
    <location>
        <position position="225"/>
    </location>
</feature>
<feature type="glycosylation site" description="N-linked (GlcNAc...) asparagine" evidence="2">
    <location>
        <position position="276"/>
    </location>
</feature>
<feature type="glycosylation site" description="N-linked (GlcNAc...) asparagine" evidence="2">
    <location>
        <position position="340"/>
    </location>
</feature>
<feature type="disulfide bond" evidence="1">
    <location>
        <begin position="30"/>
        <end position="45"/>
    </location>
</feature>
<feature type="disulfide bond" evidence="1">
    <location>
        <begin position="205"/>
        <end position="221"/>
    </location>
</feature>
<feature type="disulfide bond" evidence="1">
    <location>
        <begin position="331"/>
        <end position="336"/>
    </location>
</feature>
<feature type="disulfide bond" evidence="1">
    <location>
        <begin position="355"/>
        <end position="364"/>
    </location>
</feature>
<protein>
    <recommendedName>
        <fullName>Polygalacturonase</fullName>
        <shortName>PG</shortName>
        <ecNumber>3.2.1.15</ecNumber>
    </recommendedName>
    <alternativeName>
        <fullName>Pectinase</fullName>
    </alternativeName>
</protein>
<comment type="function">
    <text>Involved in maceration and soft-rotting of plant tissue. Hydrolyzes the 1,4-alpha glycosidic bonds of de-esterified pectate in the smooth region of the plant cell wall.</text>
</comment>
<comment type="catalytic activity">
    <reaction>
        <text>(1,4-alpha-D-galacturonosyl)n+m + H2O = (1,4-alpha-D-galacturonosyl)n + (1,4-alpha-D-galacturonosyl)m.</text>
        <dbReference type="EC" id="3.2.1.15"/>
    </reaction>
</comment>
<comment type="subcellular location">
    <subcellularLocation>
        <location evidence="4">Secreted</location>
    </subcellularLocation>
</comment>
<comment type="similarity">
    <text evidence="4">Belongs to the glycosyl hydrolase 28 family.</text>
</comment>
<dbReference type="EC" id="3.2.1.15"/>
<dbReference type="EMBL" id="M55979">
    <property type="protein sequence ID" value="AAA79885.1"/>
    <property type="molecule type" value="Genomic_DNA"/>
</dbReference>
<dbReference type="PIR" id="S28771">
    <property type="entry name" value="S28771"/>
</dbReference>
<dbReference type="SMR" id="P26215"/>
<dbReference type="CAZy" id="GH28">
    <property type="family name" value="Glycoside Hydrolase Family 28"/>
</dbReference>
<dbReference type="GlyCosmos" id="P26215">
    <property type="glycosylation" value="2 sites, No reported glycans"/>
</dbReference>
<dbReference type="PHI-base" id="PHI:3"/>
<dbReference type="GO" id="GO:0005576">
    <property type="term" value="C:extracellular region"/>
    <property type="evidence" value="ECO:0007669"/>
    <property type="project" value="UniProtKB-SubCell"/>
</dbReference>
<dbReference type="GO" id="GO:0004650">
    <property type="term" value="F:polygalacturonase activity"/>
    <property type="evidence" value="ECO:0007669"/>
    <property type="project" value="UniProtKB-EC"/>
</dbReference>
<dbReference type="GO" id="GO:0071555">
    <property type="term" value="P:cell wall organization"/>
    <property type="evidence" value="ECO:0007669"/>
    <property type="project" value="UniProtKB-KW"/>
</dbReference>
<dbReference type="GO" id="GO:0045490">
    <property type="term" value="P:pectin catabolic process"/>
    <property type="evidence" value="ECO:0007669"/>
    <property type="project" value="TreeGrafter"/>
</dbReference>
<dbReference type="FunFam" id="2.160.20.10:FF:000002">
    <property type="entry name" value="Endopolygalacturonase D"/>
    <property type="match status" value="1"/>
</dbReference>
<dbReference type="Gene3D" id="2.160.20.10">
    <property type="entry name" value="Single-stranded right-handed beta-helix, Pectin lyase-like"/>
    <property type="match status" value="1"/>
</dbReference>
<dbReference type="InterPro" id="IPR000743">
    <property type="entry name" value="Glyco_hydro_28"/>
</dbReference>
<dbReference type="InterPro" id="IPR050434">
    <property type="entry name" value="Glycosyl_hydrlase_28"/>
</dbReference>
<dbReference type="InterPro" id="IPR006626">
    <property type="entry name" value="PbH1"/>
</dbReference>
<dbReference type="InterPro" id="IPR012334">
    <property type="entry name" value="Pectin_lyas_fold"/>
</dbReference>
<dbReference type="InterPro" id="IPR011050">
    <property type="entry name" value="Pectin_lyase_fold/virulence"/>
</dbReference>
<dbReference type="PANTHER" id="PTHR31884">
    <property type="entry name" value="POLYGALACTURONASE"/>
    <property type="match status" value="1"/>
</dbReference>
<dbReference type="PANTHER" id="PTHR31884:SF1">
    <property type="entry name" value="POLYGALACTURONASE"/>
    <property type="match status" value="1"/>
</dbReference>
<dbReference type="Pfam" id="PF00295">
    <property type="entry name" value="Glyco_hydro_28"/>
    <property type="match status" value="1"/>
</dbReference>
<dbReference type="SMART" id="SM00710">
    <property type="entry name" value="PbH1"/>
    <property type="match status" value="6"/>
</dbReference>
<dbReference type="SUPFAM" id="SSF51126">
    <property type="entry name" value="Pectin lyase-like"/>
    <property type="match status" value="1"/>
</dbReference>
<dbReference type="PROSITE" id="PS00502">
    <property type="entry name" value="POLYGALACTURONASE"/>
    <property type="match status" value="1"/>
</dbReference>
<sequence length="364" mass="36597">MVAYALTSMLLSAGALVAAAPSGLDARDGCTFTDAATAIKNKASCSNIVISGMTVPAGTTLDLTGLKSGATVTFQGTTTFGYKEWEGPLISVSGTNIKVVGASGHTIDAAGQKWWDGKGSNGGKTKPKFFYAHSLTTSSISGLNIKNTPVQAFSINGVTGLTLDRITIDNSAGDSAGAHNTDAFDIGSSSGITISNANIKNQDDCVAINSGSDIHVTNCQCSGGHGVSIGSVGGRKDNTVKGVVVSGTTIANSDNGVRIKTISGATGSVSDITYENITLKNIAKYGIVIEQDYLNGGPTGKPTTGVPITGVTLKNVAGSVTGSGTEIYVLCGKGSCSGWNWSGVSITGGKKSSSCLNVPSGASC</sequence>
<accession>P26215</accession>
<name>PGLR_COCCA</name>
<gene>
    <name type="primary">PGN1</name>
</gene>